<protein>
    <recommendedName>
        <fullName>Sulfate transporter</fullName>
    </recommendedName>
    <alternativeName>
        <fullName>Diastrophic dysplasia protein homolog</fullName>
    </alternativeName>
    <alternativeName>
        <fullName>ST-OB</fullName>
    </alternativeName>
    <alternativeName>
        <fullName>Solute carrier family 26 member 2</fullName>
    </alternativeName>
</protein>
<feature type="chain" id="PRO_0000080159" description="Sulfate transporter">
    <location>
        <begin position="1"/>
        <end position="739"/>
    </location>
</feature>
<feature type="transmembrane region" description="Helical" evidence="3">
    <location>
        <begin position="112"/>
        <end position="132"/>
    </location>
</feature>
<feature type="transmembrane region" description="Helical" evidence="3">
    <location>
        <begin position="137"/>
        <end position="157"/>
    </location>
</feature>
<feature type="transmembrane region" description="Helical" evidence="3">
    <location>
        <begin position="227"/>
        <end position="247"/>
    </location>
</feature>
<feature type="transmembrane region" description="Helical" evidence="3">
    <location>
        <begin position="255"/>
        <end position="275"/>
    </location>
</feature>
<feature type="transmembrane region" description="Helical" evidence="3">
    <location>
        <begin position="378"/>
        <end position="398"/>
    </location>
</feature>
<feature type="transmembrane region" description="Helical" evidence="3">
    <location>
        <begin position="420"/>
        <end position="440"/>
    </location>
</feature>
<feature type="transmembrane region" description="Helical" evidence="3">
    <location>
        <begin position="455"/>
        <end position="475"/>
    </location>
</feature>
<feature type="transmembrane region" description="Helical" evidence="3">
    <location>
        <begin position="524"/>
        <end position="544"/>
    </location>
</feature>
<feature type="domain" description="STAS" evidence="4">
    <location>
        <begin position="568"/>
        <end position="719"/>
    </location>
</feature>
<feature type="region of interest" description="Disordered" evidence="5">
    <location>
        <begin position="1"/>
        <end position="47"/>
    </location>
</feature>
<feature type="compositionally biased region" description="Basic and acidic residues" evidence="5">
    <location>
        <begin position="1"/>
        <end position="17"/>
    </location>
</feature>
<feature type="compositionally biased region" description="Basic and acidic residues" evidence="5">
    <location>
        <begin position="31"/>
        <end position="46"/>
    </location>
</feature>
<feature type="modified residue" description="Phosphoserine" evidence="2">
    <location>
        <position position="12"/>
    </location>
</feature>
<feature type="glycosylation site" description="N-linked (GlcNAc...) asparagine" evidence="3">
    <location>
        <position position="205"/>
    </location>
</feature>
<feature type="glycosylation site" description="N-linked (GlcNAc...) asparagine" evidence="3">
    <location>
        <position position="357"/>
    </location>
</feature>
<feature type="mutagenesis site" description="Reduced sulfate-chloride exchange activity." evidence="7">
    <original>F</original>
    <variation>A</variation>
    <location>
        <position position="368"/>
    </location>
</feature>
<feature type="mutagenesis site" description="Loss of sulfate-chloride exchange activity." evidence="7">
    <original>E</original>
    <variation>A</variation>
    <variation>K</variation>
    <location>
        <position position="417"/>
    </location>
</feature>
<feature type="sequence conflict" description="In Ref. 4; AAH28345." evidence="10" ref="4">
    <original>T</original>
    <variation>A</variation>
    <location>
        <position position="31"/>
    </location>
</feature>
<keyword id="KW-1003">Cell membrane</keyword>
<keyword id="KW-0325">Glycoprotein</keyword>
<keyword id="KW-0472">Membrane</keyword>
<keyword id="KW-0597">Phosphoprotein</keyword>
<keyword id="KW-1185">Reference proteome</keyword>
<keyword id="KW-0812">Transmembrane</keyword>
<keyword id="KW-1133">Transmembrane helix</keyword>
<keyword id="KW-0813">Transport</keyword>
<name>S26A2_MOUSE</name>
<sequence>MSSENKEQHDLSPRDLPEEAFGFPSELPLETQRRSGTDLRQSETGHGRRAFRRIHMELREKPDTDIKQFVIRELQKSCQCSAAKVRDGAFDFFPVLRWLPKYDLKKNILGDVMSGLIVGILLVPQSIAYSLLAGQEPIYGLYTSFFASIIYFLFGTSRHISVGIFGILCLMIGEVVDRELHKACPDTDATSSSIAVFSSGCVVVNHTLDGLCDKSCYAIKIGSTVTFMAGVYQVAMGFFQVGFVSVYLSDALLSGFVTGASFTILTSQAKYLLGLSLPRSHGVGSVITTWIHIFRNIRNTNICDLITSLLCLLVLVPSKELNEHFKDKLKAPIPVELIVVVAATLASHFGKLNGNYNSSIAGHIPTGFMPPKAPDWSLIPNVAVDAIAISIIGFAITVSLSEMFAKKHGYTVKANQEMYAIGFCNIIPSFFHCITTSAALAKTLVKESTGCQTQLSAIVTALVLLLVLLVIAPLFYSLQKCVLGVITIVNLRGALLKFRDLPKMWRLSRMDTVIWFVTMLSSALLSTEIGLLVGVCFSMFCVILRTQKPKNSLLGLEEESETFESISTYKNLRSKSGIKVFRFIAPLYYINKECFKSALYKKALNPVLVKAAWKKAAKRKLKEEMVTFRGDPDEVSMQLSHDPLEVHTIVIDCSAIQFLDTAGIHTLKEVRRDYEAVGIQVLLAQCNPSVRDSLARGEYCKKEEETLLFYSLSEAVAFAEDSQNQKGVCVVNGLSLSGD</sequence>
<reference key="1">
    <citation type="journal article" date="1997" name="Gene">
        <title>Cloning of mouse diastrophic dysplasia sulfate transporter gene induced during osteoblast differentiation by bone morphogenetic protein-2.</title>
        <authorList>
            <person name="Kobayashi T."/>
            <person name="Sugimoto T."/>
            <person name="Saijoh K."/>
            <person name="Fukase M."/>
            <person name="Chihara K."/>
        </authorList>
    </citation>
    <scope>NUCLEOTIDE SEQUENCE [MRNA]</scope>
</reference>
<reference key="2">
    <citation type="journal article" date="2005" name="Science">
        <title>The transcriptional landscape of the mammalian genome.</title>
        <authorList>
            <person name="Carninci P."/>
            <person name="Kasukawa T."/>
            <person name="Katayama S."/>
            <person name="Gough J."/>
            <person name="Frith M.C."/>
            <person name="Maeda N."/>
            <person name="Oyama R."/>
            <person name="Ravasi T."/>
            <person name="Lenhard B."/>
            <person name="Wells C."/>
            <person name="Kodzius R."/>
            <person name="Shimokawa K."/>
            <person name="Bajic V.B."/>
            <person name="Brenner S.E."/>
            <person name="Batalov S."/>
            <person name="Forrest A.R."/>
            <person name="Zavolan M."/>
            <person name="Davis M.J."/>
            <person name="Wilming L.G."/>
            <person name="Aidinis V."/>
            <person name="Allen J.E."/>
            <person name="Ambesi-Impiombato A."/>
            <person name="Apweiler R."/>
            <person name="Aturaliya R.N."/>
            <person name="Bailey T.L."/>
            <person name="Bansal M."/>
            <person name="Baxter L."/>
            <person name="Beisel K.W."/>
            <person name="Bersano T."/>
            <person name="Bono H."/>
            <person name="Chalk A.M."/>
            <person name="Chiu K.P."/>
            <person name="Choudhary V."/>
            <person name="Christoffels A."/>
            <person name="Clutterbuck D.R."/>
            <person name="Crowe M.L."/>
            <person name="Dalla E."/>
            <person name="Dalrymple B.P."/>
            <person name="de Bono B."/>
            <person name="Della Gatta G."/>
            <person name="di Bernardo D."/>
            <person name="Down T."/>
            <person name="Engstrom P."/>
            <person name="Fagiolini M."/>
            <person name="Faulkner G."/>
            <person name="Fletcher C.F."/>
            <person name="Fukushima T."/>
            <person name="Furuno M."/>
            <person name="Futaki S."/>
            <person name="Gariboldi M."/>
            <person name="Georgii-Hemming P."/>
            <person name="Gingeras T.R."/>
            <person name="Gojobori T."/>
            <person name="Green R.E."/>
            <person name="Gustincich S."/>
            <person name="Harbers M."/>
            <person name="Hayashi Y."/>
            <person name="Hensch T.K."/>
            <person name="Hirokawa N."/>
            <person name="Hill D."/>
            <person name="Huminiecki L."/>
            <person name="Iacono M."/>
            <person name="Ikeo K."/>
            <person name="Iwama A."/>
            <person name="Ishikawa T."/>
            <person name="Jakt M."/>
            <person name="Kanapin A."/>
            <person name="Katoh M."/>
            <person name="Kawasawa Y."/>
            <person name="Kelso J."/>
            <person name="Kitamura H."/>
            <person name="Kitano H."/>
            <person name="Kollias G."/>
            <person name="Krishnan S.P."/>
            <person name="Kruger A."/>
            <person name="Kummerfeld S.K."/>
            <person name="Kurochkin I.V."/>
            <person name="Lareau L.F."/>
            <person name="Lazarevic D."/>
            <person name="Lipovich L."/>
            <person name="Liu J."/>
            <person name="Liuni S."/>
            <person name="McWilliam S."/>
            <person name="Madan Babu M."/>
            <person name="Madera M."/>
            <person name="Marchionni L."/>
            <person name="Matsuda H."/>
            <person name="Matsuzawa S."/>
            <person name="Miki H."/>
            <person name="Mignone F."/>
            <person name="Miyake S."/>
            <person name="Morris K."/>
            <person name="Mottagui-Tabar S."/>
            <person name="Mulder N."/>
            <person name="Nakano N."/>
            <person name="Nakauchi H."/>
            <person name="Ng P."/>
            <person name="Nilsson R."/>
            <person name="Nishiguchi S."/>
            <person name="Nishikawa S."/>
            <person name="Nori F."/>
            <person name="Ohara O."/>
            <person name="Okazaki Y."/>
            <person name="Orlando V."/>
            <person name="Pang K.C."/>
            <person name="Pavan W.J."/>
            <person name="Pavesi G."/>
            <person name="Pesole G."/>
            <person name="Petrovsky N."/>
            <person name="Piazza S."/>
            <person name="Reed J."/>
            <person name="Reid J.F."/>
            <person name="Ring B.Z."/>
            <person name="Ringwald M."/>
            <person name="Rost B."/>
            <person name="Ruan Y."/>
            <person name="Salzberg S.L."/>
            <person name="Sandelin A."/>
            <person name="Schneider C."/>
            <person name="Schoenbach C."/>
            <person name="Sekiguchi K."/>
            <person name="Semple C.A."/>
            <person name="Seno S."/>
            <person name="Sessa L."/>
            <person name="Sheng Y."/>
            <person name="Shibata Y."/>
            <person name="Shimada H."/>
            <person name="Shimada K."/>
            <person name="Silva D."/>
            <person name="Sinclair B."/>
            <person name="Sperling S."/>
            <person name="Stupka E."/>
            <person name="Sugiura K."/>
            <person name="Sultana R."/>
            <person name="Takenaka Y."/>
            <person name="Taki K."/>
            <person name="Tammoja K."/>
            <person name="Tan S.L."/>
            <person name="Tang S."/>
            <person name="Taylor M.S."/>
            <person name="Tegner J."/>
            <person name="Teichmann S.A."/>
            <person name="Ueda H.R."/>
            <person name="van Nimwegen E."/>
            <person name="Verardo R."/>
            <person name="Wei C.L."/>
            <person name="Yagi K."/>
            <person name="Yamanishi H."/>
            <person name="Zabarovsky E."/>
            <person name="Zhu S."/>
            <person name="Zimmer A."/>
            <person name="Hide W."/>
            <person name="Bult C."/>
            <person name="Grimmond S.M."/>
            <person name="Teasdale R.D."/>
            <person name="Liu E.T."/>
            <person name="Brusic V."/>
            <person name="Quackenbush J."/>
            <person name="Wahlestedt C."/>
            <person name="Mattick J.S."/>
            <person name="Hume D.A."/>
            <person name="Kai C."/>
            <person name="Sasaki D."/>
            <person name="Tomaru Y."/>
            <person name="Fukuda S."/>
            <person name="Kanamori-Katayama M."/>
            <person name="Suzuki M."/>
            <person name="Aoki J."/>
            <person name="Arakawa T."/>
            <person name="Iida J."/>
            <person name="Imamura K."/>
            <person name="Itoh M."/>
            <person name="Kato T."/>
            <person name="Kawaji H."/>
            <person name="Kawagashira N."/>
            <person name="Kawashima T."/>
            <person name="Kojima M."/>
            <person name="Kondo S."/>
            <person name="Konno H."/>
            <person name="Nakano K."/>
            <person name="Ninomiya N."/>
            <person name="Nishio T."/>
            <person name="Okada M."/>
            <person name="Plessy C."/>
            <person name="Shibata K."/>
            <person name="Shiraki T."/>
            <person name="Suzuki S."/>
            <person name="Tagami M."/>
            <person name="Waki K."/>
            <person name="Watahiki A."/>
            <person name="Okamura-Oho Y."/>
            <person name="Suzuki H."/>
            <person name="Kawai J."/>
            <person name="Hayashizaki Y."/>
        </authorList>
    </citation>
    <scope>NUCLEOTIDE SEQUENCE [LARGE SCALE MRNA]</scope>
    <source>
        <strain>C57BL/6J</strain>
        <tissue>Heart</tissue>
    </source>
</reference>
<reference key="3">
    <citation type="submission" date="2005-09" db="EMBL/GenBank/DDBJ databases">
        <authorList>
            <person name="Mural R.J."/>
            <person name="Adams M.D."/>
            <person name="Myers E.W."/>
            <person name="Smith H.O."/>
            <person name="Venter J.C."/>
        </authorList>
    </citation>
    <scope>NUCLEOTIDE SEQUENCE [LARGE SCALE GENOMIC DNA]</scope>
</reference>
<reference key="4">
    <citation type="journal article" date="2004" name="Genome Res.">
        <title>The status, quality, and expansion of the NIH full-length cDNA project: the Mammalian Gene Collection (MGC).</title>
        <authorList>
            <consortium name="The MGC Project Team"/>
        </authorList>
    </citation>
    <scope>NUCLEOTIDE SEQUENCE [LARGE SCALE MRNA]</scope>
    <source>
        <strain>Czech II</strain>
        <tissue>Mammary tumor</tissue>
    </source>
</reference>
<reference key="5">
    <citation type="journal article" date="2010" name="Cell">
        <title>A tissue-specific atlas of mouse protein phosphorylation and expression.</title>
        <authorList>
            <person name="Huttlin E.L."/>
            <person name="Jedrychowski M.P."/>
            <person name="Elias J.E."/>
            <person name="Goswami T."/>
            <person name="Rad R."/>
            <person name="Beausoleil S.A."/>
            <person name="Villen J."/>
            <person name="Haas W."/>
            <person name="Sowa M.E."/>
            <person name="Gygi S.P."/>
        </authorList>
    </citation>
    <scope>IDENTIFICATION BY MASS SPECTROMETRY [LARGE SCALE ANALYSIS]</scope>
    <source>
        <tissue>Testis</tissue>
    </source>
</reference>
<reference key="6">
    <citation type="journal article" date="2010" name="Am. J. Physiol.">
        <title>Regulated transport of sulfate and oxalate by SLC26A2/DTDST.</title>
        <authorList>
            <person name="Heneghan J.F."/>
            <person name="Akhavein A."/>
            <person name="Salas M.J."/>
            <person name="Shmukler B.E."/>
            <person name="Karniski L.P."/>
            <person name="Vandorpe D.H."/>
            <person name="Alper S.L."/>
        </authorList>
    </citation>
    <scope>FUNCTION</scope>
    <scope>TRANSPORTER ACTIVITY</scope>
</reference>
<reference key="7">
    <citation type="journal article" date="2012" name="J. Biol. Chem.">
        <title>Solute carrier family 26 member a2 (Slc26a2) protein functions as an electroneutral SOFormula/OH-/Cl- exchanger regulated by extracellular Cl-.</title>
        <authorList>
            <person name="Ohana E."/>
            <person name="Shcheynikov N."/>
            <person name="Park M."/>
            <person name="Muallem S."/>
        </authorList>
    </citation>
    <scope>FUNCTION</scope>
    <scope>TRANSPORTER ACTIVITY</scope>
    <scope>MUTAGENESIS OF PHE-368 AND GLU-417</scope>
</reference>
<reference key="8">
    <citation type="journal article" date="2014" name="J. Biol. Chem.">
        <title>Multiple roles of the SO4(2-)/Cl-/OH- exchanger protein Slc26a2 in chondrocyte functions.</title>
        <authorList>
            <person name="Park M."/>
            <person name="Ohana E."/>
            <person name="Choi S.Y."/>
            <person name="Lee M.S."/>
            <person name="Park J.H."/>
            <person name="Muallem S."/>
        </authorList>
    </citation>
    <scope>FUNCTION</scope>
    <scope>TRANSPORTER ACTIVITY</scope>
    <scope>TISSUE SPECIFICITY</scope>
</reference>
<comment type="function">
    <text evidence="6 7 8">Sulfate transporter which mediates sulfate uptake into chondrocytes in order to maintain adequate sulfation of proteoglycans which is needed for cartilage development (PubMed:24302720). Mediates electroneutral anion exchange of sulfate ions for oxalate ions, sulfate and oxalate ions for chloride and/or hydroxyl ions and chloride ions for bromide, iodide and nitrate ions (PubMed:20219950, PubMed:22190686, PubMed:24302720). The coupling of sulfate transport to both hydroxyl and chloride ions likely serves to ensure transport at both acidic pH when most sulfate uptake is mediated by sulfate-hydroxide exchange and alkaline pH when most sulfate uptake is mediated by sulfate-chloride exchange (PubMed:22190686). Essential for chondrocyte proliferation, differentiation and cell size expansion (PubMed:24302720).</text>
</comment>
<comment type="catalytic activity">
    <reaction evidence="6">
        <text>oxalate(in) + sulfate(out) = oxalate(out) + sulfate(in)</text>
        <dbReference type="Rhea" id="RHEA:72275"/>
        <dbReference type="ChEBI" id="CHEBI:16189"/>
        <dbReference type="ChEBI" id="CHEBI:30623"/>
    </reaction>
</comment>
<comment type="catalytic activity">
    <reaction evidence="6 7 8">
        <text>sulfate(out) + 2 chloride(in) = sulfate(in) + 2 chloride(out)</text>
        <dbReference type="Rhea" id="RHEA:75091"/>
        <dbReference type="ChEBI" id="CHEBI:16189"/>
        <dbReference type="ChEBI" id="CHEBI:17996"/>
    </reaction>
</comment>
<comment type="catalytic activity">
    <reaction evidence="6 7">
        <text>oxalate(out) + 2 chloride(in) = oxalate(in) + 2 chloride(out)</text>
        <dbReference type="Rhea" id="RHEA:75095"/>
        <dbReference type="ChEBI" id="CHEBI:17996"/>
        <dbReference type="ChEBI" id="CHEBI:30623"/>
    </reaction>
</comment>
<comment type="catalytic activity">
    <reaction evidence="7">
        <text>bromide(in) + chloride(out) = bromide(out) + chloride(in)</text>
        <dbReference type="Rhea" id="RHEA:75335"/>
        <dbReference type="ChEBI" id="CHEBI:15858"/>
        <dbReference type="ChEBI" id="CHEBI:17996"/>
    </reaction>
</comment>
<comment type="catalytic activity">
    <reaction evidence="7">
        <text>nitrate(in) + chloride(out) = nitrate(out) + chloride(in)</text>
        <dbReference type="Rhea" id="RHEA:75339"/>
        <dbReference type="ChEBI" id="CHEBI:17632"/>
        <dbReference type="ChEBI" id="CHEBI:17996"/>
    </reaction>
</comment>
<comment type="catalytic activity">
    <reaction evidence="7">
        <text>iodide(in) + chloride(out) = iodide(out) + chloride(in)</text>
        <dbReference type="Rhea" id="RHEA:72379"/>
        <dbReference type="ChEBI" id="CHEBI:16382"/>
        <dbReference type="ChEBI" id="CHEBI:17996"/>
    </reaction>
</comment>
<comment type="subcellular location">
    <subcellularLocation>
        <location evidence="2">Cell membrane</location>
        <topology evidence="3">Multi-pass membrane protein</topology>
    </subcellularLocation>
    <subcellularLocation>
        <location evidence="1">Apical cell membrane</location>
        <topology evidence="3">Multi-pass membrane protein</topology>
    </subcellularLocation>
</comment>
<comment type="tissue specificity">
    <text evidence="8 9">Distributed mainly in the thymus, testis and osteoblastic cells (PubMed:9370300). Highly expressed in the bone, cartilage, kidney and colon (PubMed:24302720).</text>
</comment>
<comment type="PTM">
    <text evidence="2">N-glycosylated.</text>
</comment>
<comment type="similarity">
    <text evidence="10">Belongs to the SLC26A/SulP transporter (TC 2.A.53) family.</text>
</comment>
<accession>Q62273</accession>
<accession>Q543D6</accession>
<accession>Q8R2L9</accession>
<proteinExistence type="evidence at protein level"/>
<dbReference type="EMBL" id="D42049">
    <property type="protein sequence ID" value="BAA07650.1"/>
    <property type="molecule type" value="mRNA"/>
</dbReference>
<dbReference type="EMBL" id="AK052942">
    <property type="protein sequence ID" value="BAC35214.1"/>
    <property type="molecule type" value="mRNA"/>
</dbReference>
<dbReference type="EMBL" id="AK163974">
    <property type="protein sequence ID" value="BAE37562.1"/>
    <property type="molecule type" value="mRNA"/>
</dbReference>
<dbReference type="EMBL" id="CH466528">
    <property type="protein sequence ID" value="EDL09779.1"/>
    <property type="molecule type" value="Genomic_DNA"/>
</dbReference>
<dbReference type="EMBL" id="BC028345">
    <property type="protein sequence ID" value="AAH28345.1"/>
    <property type="molecule type" value="mRNA"/>
</dbReference>
<dbReference type="CCDS" id="CCDS29282.1"/>
<dbReference type="RefSeq" id="NP_031911.1">
    <property type="nucleotide sequence ID" value="NM_007885.2"/>
</dbReference>
<dbReference type="SMR" id="Q62273"/>
<dbReference type="BioGRID" id="199329">
    <property type="interactions" value="1"/>
</dbReference>
<dbReference type="FunCoup" id="Q62273">
    <property type="interactions" value="111"/>
</dbReference>
<dbReference type="STRING" id="10090.ENSMUSP00000119447"/>
<dbReference type="GlyCosmos" id="Q62273">
    <property type="glycosylation" value="2 sites, No reported glycans"/>
</dbReference>
<dbReference type="GlyGen" id="Q62273">
    <property type="glycosylation" value="2 sites"/>
</dbReference>
<dbReference type="iPTMnet" id="Q62273"/>
<dbReference type="PhosphoSitePlus" id="Q62273"/>
<dbReference type="SwissPalm" id="Q62273"/>
<dbReference type="jPOST" id="Q62273"/>
<dbReference type="PaxDb" id="10090-ENSMUSP00000119447"/>
<dbReference type="PeptideAtlas" id="Q62273"/>
<dbReference type="ProteomicsDB" id="260769"/>
<dbReference type="Antibodypedia" id="27892">
    <property type="antibodies" value="142 antibodies from 24 providers"/>
</dbReference>
<dbReference type="DNASU" id="13521"/>
<dbReference type="Ensembl" id="ENSMUST00000146409.8">
    <property type="protein sequence ID" value="ENSMUSP00000119447.2"/>
    <property type="gene ID" value="ENSMUSG00000034320.15"/>
</dbReference>
<dbReference type="GeneID" id="13521"/>
<dbReference type="KEGG" id="mmu:13521"/>
<dbReference type="UCSC" id="uc008fbu.1">
    <property type="organism name" value="mouse"/>
</dbReference>
<dbReference type="AGR" id="MGI:892977"/>
<dbReference type="CTD" id="1836"/>
<dbReference type="MGI" id="MGI:892977">
    <property type="gene designation" value="Slc26a2"/>
</dbReference>
<dbReference type="VEuPathDB" id="HostDB:ENSMUSG00000034320"/>
<dbReference type="eggNOG" id="KOG0236">
    <property type="taxonomic scope" value="Eukaryota"/>
</dbReference>
<dbReference type="GeneTree" id="ENSGT01120000271864"/>
<dbReference type="InParanoid" id="Q62273"/>
<dbReference type="OMA" id="PALYWIP"/>
<dbReference type="OrthoDB" id="288203at2759"/>
<dbReference type="PhylomeDB" id="Q62273"/>
<dbReference type="TreeFam" id="TF313784"/>
<dbReference type="Reactome" id="R-MMU-174362">
    <property type="pathway name" value="Transport and synthesis of PAPS"/>
</dbReference>
<dbReference type="Reactome" id="R-MMU-427601">
    <property type="pathway name" value="Multifunctional anion exchangers"/>
</dbReference>
<dbReference type="BioGRID-ORCS" id="13521">
    <property type="hits" value="3 hits in 78 CRISPR screens"/>
</dbReference>
<dbReference type="ChiTaRS" id="Nqo1">
    <property type="organism name" value="mouse"/>
</dbReference>
<dbReference type="PRO" id="PR:Q62273"/>
<dbReference type="Proteomes" id="UP000000589">
    <property type="component" value="Chromosome 18"/>
</dbReference>
<dbReference type="RNAct" id="Q62273">
    <property type="molecule type" value="protein"/>
</dbReference>
<dbReference type="Bgee" id="ENSMUSG00000034320">
    <property type="expression patterns" value="Expressed in left colon and 266 other cell types or tissues"/>
</dbReference>
<dbReference type="ExpressionAtlas" id="Q62273">
    <property type="expression patterns" value="baseline and differential"/>
</dbReference>
<dbReference type="GO" id="GO:0016324">
    <property type="term" value="C:apical plasma membrane"/>
    <property type="evidence" value="ECO:0007669"/>
    <property type="project" value="UniProtKB-SubCell"/>
</dbReference>
<dbReference type="GO" id="GO:0031528">
    <property type="term" value="C:microvillus membrane"/>
    <property type="evidence" value="ECO:0007669"/>
    <property type="project" value="Ensembl"/>
</dbReference>
<dbReference type="GO" id="GO:0005886">
    <property type="term" value="C:plasma membrane"/>
    <property type="evidence" value="ECO:0000315"/>
    <property type="project" value="MGI"/>
</dbReference>
<dbReference type="GO" id="GO:0008271">
    <property type="term" value="F:secondary active sulfate transmembrane transporter activity"/>
    <property type="evidence" value="ECO:0007669"/>
    <property type="project" value="InterPro"/>
</dbReference>
<dbReference type="GO" id="GO:0005452">
    <property type="term" value="F:solute:inorganic anion antiporter activity"/>
    <property type="evidence" value="ECO:0000314"/>
    <property type="project" value="UniProtKB"/>
</dbReference>
<dbReference type="GO" id="GO:0015116">
    <property type="term" value="F:sulfate transmembrane transporter activity"/>
    <property type="evidence" value="ECO:0000315"/>
    <property type="project" value="MGI"/>
</dbReference>
<dbReference type="GO" id="GO:0002062">
    <property type="term" value="P:chondrocyte differentiation"/>
    <property type="evidence" value="ECO:0000315"/>
    <property type="project" value="UniProtKB"/>
</dbReference>
<dbReference type="GO" id="GO:0035988">
    <property type="term" value="P:chondrocyte proliferation"/>
    <property type="evidence" value="ECO:0000315"/>
    <property type="project" value="UniProtKB"/>
</dbReference>
<dbReference type="GO" id="GO:1902358">
    <property type="term" value="P:sulfate transmembrane transport"/>
    <property type="evidence" value="ECO:0000315"/>
    <property type="project" value="UniProtKB"/>
</dbReference>
<dbReference type="FunFam" id="3.30.750.24:FF:000015">
    <property type="entry name" value="Sulfate transporter"/>
    <property type="match status" value="1"/>
</dbReference>
<dbReference type="Gene3D" id="3.30.750.24">
    <property type="entry name" value="STAS domain"/>
    <property type="match status" value="1"/>
</dbReference>
<dbReference type="InterPro" id="IPR018045">
    <property type="entry name" value="S04_transporter_CS"/>
</dbReference>
<dbReference type="InterPro" id="IPR011547">
    <property type="entry name" value="SLC26A/SulP_dom"/>
</dbReference>
<dbReference type="InterPro" id="IPR001902">
    <property type="entry name" value="SLC26A/SulP_fam"/>
</dbReference>
<dbReference type="InterPro" id="IPR002645">
    <property type="entry name" value="STAS_dom"/>
</dbReference>
<dbReference type="InterPro" id="IPR036513">
    <property type="entry name" value="STAS_dom_sf"/>
</dbReference>
<dbReference type="NCBIfam" id="TIGR00815">
    <property type="entry name" value="sulP"/>
    <property type="match status" value="1"/>
</dbReference>
<dbReference type="PANTHER" id="PTHR11814">
    <property type="entry name" value="SULFATE TRANSPORTER"/>
    <property type="match status" value="1"/>
</dbReference>
<dbReference type="Pfam" id="PF01740">
    <property type="entry name" value="STAS"/>
    <property type="match status" value="1"/>
</dbReference>
<dbReference type="Pfam" id="PF00916">
    <property type="entry name" value="Sulfate_transp"/>
    <property type="match status" value="1"/>
</dbReference>
<dbReference type="SUPFAM" id="SSF52091">
    <property type="entry name" value="SpoIIaa-like"/>
    <property type="match status" value="1"/>
</dbReference>
<dbReference type="PROSITE" id="PS01130">
    <property type="entry name" value="SLC26A"/>
    <property type="match status" value="1"/>
</dbReference>
<dbReference type="PROSITE" id="PS50801">
    <property type="entry name" value="STAS"/>
    <property type="match status" value="1"/>
</dbReference>
<organism>
    <name type="scientific">Mus musculus</name>
    <name type="common">Mouse</name>
    <dbReference type="NCBI Taxonomy" id="10090"/>
    <lineage>
        <taxon>Eukaryota</taxon>
        <taxon>Metazoa</taxon>
        <taxon>Chordata</taxon>
        <taxon>Craniata</taxon>
        <taxon>Vertebrata</taxon>
        <taxon>Euteleostomi</taxon>
        <taxon>Mammalia</taxon>
        <taxon>Eutheria</taxon>
        <taxon>Euarchontoglires</taxon>
        <taxon>Glires</taxon>
        <taxon>Rodentia</taxon>
        <taxon>Myomorpha</taxon>
        <taxon>Muroidea</taxon>
        <taxon>Muridae</taxon>
        <taxon>Murinae</taxon>
        <taxon>Mus</taxon>
        <taxon>Mus</taxon>
    </lineage>
</organism>
<gene>
    <name type="primary">Slc26a2</name>
    <name type="synonym">Dtd</name>
    <name type="synonym">Dtdst</name>
</gene>
<evidence type="ECO:0000250" key="1">
    <source>
        <dbReference type="UniProtKB" id="O70531"/>
    </source>
</evidence>
<evidence type="ECO:0000250" key="2">
    <source>
        <dbReference type="UniProtKB" id="P50443"/>
    </source>
</evidence>
<evidence type="ECO:0000255" key="3"/>
<evidence type="ECO:0000255" key="4">
    <source>
        <dbReference type="PROSITE-ProRule" id="PRU00198"/>
    </source>
</evidence>
<evidence type="ECO:0000256" key="5">
    <source>
        <dbReference type="SAM" id="MobiDB-lite"/>
    </source>
</evidence>
<evidence type="ECO:0000269" key="6">
    <source>
    </source>
</evidence>
<evidence type="ECO:0000269" key="7">
    <source>
    </source>
</evidence>
<evidence type="ECO:0000269" key="8">
    <source>
    </source>
</evidence>
<evidence type="ECO:0000269" key="9">
    <source>
    </source>
</evidence>
<evidence type="ECO:0000305" key="10"/>